<feature type="chain" id="PRO_0000231250" description="UDP-N-acetylglucosamine 1-carboxyvinyltransferase">
    <location>
        <begin position="1"/>
        <end position="421"/>
    </location>
</feature>
<feature type="active site" description="Proton donor" evidence="1">
    <location>
        <position position="117"/>
    </location>
</feature>
<feature type="binding site" evidence="1">
    <location>
        <begin position="22"/>
        <end position="23"/>
    </location>
    <ligand>
        <name>phosphoenolpyruvate</name>
        <dbReference type="ChEBI" id="CHEBI:58702"/>
    </ligand>
</feature>
<feature type="binding site" evidence="1">
    <location>
        <position position="93"/>
    </location>
    <ligand>
        <name>UDP-N-acetyl-alpha-D-glucosamine</name>
        <dbReference type="ChEBI" id="CHEBI:57705"/>
    </ligand>
</feature>
<feature type="binding site" evidence="1">
    <location>
        <begin position="122"/>
        <end position="126"/>
    </location>
    <ligand>
        <name>UDP-N-acetyl-alpha-D-glucosamine</name>
        <dbReference type="ChEBI" id="CHEBI:57705"/>
    </ligand>
</feature>
<feature type="binding site" evidence="1">
    <location>
        <position position="308"/>
    </location>
    <ligand>
        <name>UDP-N-acetyl-alpha-D-glucosamine</name>
        <dbReference type="ChEBI" id="CHEBI:57705"/>
    </ligand>
</feature>
<feature type="binding site" evidence="1">
    <location>
        <position position="330"/>
    </location>
    <ligand>
        <name>UDP-N-acetyl-alpha-D-glucosamine</name>
        <dbReference type="ChEBI" id="CHEBI:57705"/>
    </ligand>
</feature>
<feature type="modified residue" description="2-(S-cysteinyl)pyruvic acid O-phosphothioketal" evidence="1">
    <location>
        <position position="117"/>
    </location>
</feature>
<organism>
    <name type="scientific">Pseudomonas syringae pv. syringae (strain B728a)</name>
    <dbReference type="NCBI Taxonomy" id="205918"/>
    <lineage>
        <taxon>Bacteria</taxon>
        <taxon>Pseudomonadati</taxon>
        <taxon>Pseudomonadota</taxon>
        <taxon>Gammaproteobacteria</taxon>
        <taxon>Pseudomonadales</taxon>
        <taxon>Pseudomonadaceae</taxon>
        <taxon>Pseudomonas</taxon>
        <taxon>Pseudomonas syringae</taxon>
    </lineage>
</organism>
<accession>Q4ZNV7</accession>
<sequence>MDKLIITGGVRLDGEIRISGAKNSALPILAATLLADGPVTVQNLPHLHDITTMIELFGRMGIEPVIDEKLSVEIDPRTIKTLVAPYELVKTMRASILVLGPMVARFGEAEVALPGGCAIGSRPVDLHIRGLEAMGAIIDVEGGYIKAKAPEGGLRGANFFFDTVSVTGTENIMMAASLANGRSVLQNAAREPEVVDLANFLIAMGAKIHGAGTDTITIDGVKRLGPATYKVMPDRIETGTYLVAAAVTGGRVKVKDTDPTILEAVLLKLQEAGAEVTTGEDWIELNMHGKRPKAVNVRTAPYPAFPTDMQAQFISLNAIAEGTGAVIETIFENRFMHVYEMHRMGAQIQVEGNTAIVTGTEVLKGAPVMATDLRASASLVISALVAQGDTLIDRIYHIDRGYECIEEKLQMLGAKIRRVPG</sequence>
<proteinExistence type="inferred from homology"/>
<evidence type="ECO:0000255" key="1">
    <source>
        <dbReference type="HAMAP-Rule" id="MF_00111"/>
    </source>
</evidence>
<keyword id="KW-0131">Cell cycle</keyword>
<keyword id="KW-0132">Cell division</keyword>
<keyword id="KW-0133">Cell shape</keyword>
<keyword id="KW-0961">Cell wall biogenesis/degradation</keyword>
<keyword id="KW-0963">Cytoplasm</keyword>
<keyword id="KW-0573">Peptidoglycan synthesis</keyword>
<keyword id="KW-0670">Pyruvate</keyword>
<keyword id="KW-0808">Transferase</keyword>
<reference key="1">
    <citation type="journal article" date="2005" name="Proc. Natl. Acad. Sci. U.S.A.">
        <title>Comparison of the complete genome sequences of Pseudomonas syringae pv. syringae B728a and pv. tomato DC3000.</title>
        <authorList>
            <person name="Feil H."/>
            <person name="Feil W.S."/>
            <person name="Chain P."/>
            <person name="Larimer F."/>
            <person name="Dibartolo G."/>
            <person name="Copeland A."/>
            <person name="Lykidis A."/>
            <person name="Trong S."/>
            <person name="Nolan M."/>
            <person name="Goltsman E."/>
            <person name="Thiel J."/>
            <person name="Malfatti S."/>
            <person name="Loper J.E."/>
            <person name="Lapidus A."/>
            <person name="Detter J.C."/>
            <person name="Land M."/>
            <person name="Richardson P.M."/>
            <person name="Kyrpides N.C."/>
            <person name="Ivanova N."/>
            <person name="Lindow S.E."/>
        </authorList>
    </citation>
    <scope>NUCLEOTIDE SEQUENCE [LARGE SCALE GENOMIC DNA]</scope>
    <source>
        <strain>B728a</strain>
    </source>
</reference>
<gene>
    <name evidence="1" type="primary">murA</name>
    <name type="ordered locus">Psyr_4135</name>
</gene>
<comment type="function">
    <text evidence="1">Cell wall formation. Adds enolpyruvyl to UDP-N-acetylglucosamine.</text>
</comment>
<comment type="catalytic activity">
    <reaction evidence="1">
        <text>phosphoenolpyruvate + UDP-N-acetyl-alpha-D-glucosamine = UDP-N-acetyl-3-O-(1-carboxyvinyl)-alpha-D-glucosamine + phosphate</text>
        <dbReference type="Rhea" id="RHEA:18681"/>
        <dbReference type="ChEBI" id="CHEBI:43474"/>
        <dbReference type="ChEBI" id="CHEBI:57705"/>
        <dbReference type="ChEBI" id="CHEBI:58702"/>
        <dbReference type="ChEBI" id="CHEBI:68483"/>
        <dbReference type="EC" id="2.5.1.7"/>
    </reaction>
</comment>
<comment type="pathway">
    <text evidence="1">Cell wall biogenesis; peptidoglycan biosynthesis.</text>
</comment>
<comment type="subcellular location">
    <subcellularLocation>
        <location evidence="1">Cytoplasm</location>
    </subcellularLocation>
</comment>
<comment type="similarity">
    <text evidence="1">Belongs to the EPSP synthase family. MurA subfamily.</text>
</comment>
<dbReference type="EC" id="2.5.1.7" evidence="1"/>
<dbReference type="EMBL" id="CP000075">
    <property type="protein sequence ID" value="AAY39165.1"/>
    <property type="molecule type" value="Genomic_DNA"/>
</dbReference>
<dbReference type="RefSeq" id="WP_002555078.1">
    <property type="nucleotide sequence ID" value="NC_007005.1"/>
</dbReference>
<dbReference type="RefSeq" id="YP_237203.1">
    <property type="nucleotide sequence ID" value="NC_007005.1"/>
</dbReference>
<dbReference type="SMR" id="Q4ZNV7"/>
<dbReference type="STRING" id="205918.Psyr_4135"/>
<dbReference type="GeneID" id="96220613"/>
<dbReference type="KEGG" id="psb:Psyr_4135"/>
<dbReference type="PATRIC" id="fig|205918.7.peg.4255"/>
<dbReference type="eggNOG" id="COG0766">
    <property type="taxonomic scope" value="Bacteria"/>
</dbReference>
<dbReference type="HOGENOM" id="CLU_027387_0_0_6"/>
<dbReference type="OrthoDB" id="9803760at2"/>
<dbReference type="UniPathway" id="UPA00219"/>
<dbReference type="Proteomes" id="UP000000426">
    <property type="component" value="Chromosome"/>
</dbReference>
<dbReference type="GO" id="GO:0005737">
    <property type="term" value="C:cytoplasm"/>
    <property type="evidence" value="ECO:0007669"/>
    <property type="project" value="UniProtKB-SubCell"/>
</dbReference>
<dbReference type="GO" id="GO:0008760">
    <property type="term" value="F:UDP-N-acetylglucosamine 1-carboxyvinyltransferase activity"/>
    <property type="evidence" value="ECO:0007669"/>
    <property type="project" value="UniProtKB-UniRule"/>
</dbReference>
<dbReference type="GO" id="GO:0051301">
    <property type="term" value="P:cell division"/>
    <property type="evidence" value="ECO:0007669"/>
    <property type="project" value="UniProtKB-KW"/>
</dbReference>
<dbReference type="GO" id="GO:0071555">
    <property type="term" value="P:cell wall organization"/>
    <property type="evidence" value="ECO:0007669"/>
    <property type="project" value="UniProtKB-KW"/>
</dbReference>
<dbReference type="GO" id="GO:0009252">
    <property type="term" value="P:peptidoglycan biosynthetic process"/>
    <property type="evidence" value="ECO:0007669"/>
    <property type="project" value="UniProtKB-UniRule"/>
</dbReference>
<dbReference type="GO" id="GO:0008360">
    <property type="term" value="P:regulation of cell shape"/>
    <property type="evidence" value="ECO:0007669"/>
    <property type="project" value="UniProtKB-KW"/>
</dbReference>
<dbReference type="GO" id="GO:0019277">
    <property type="term" value="P:UDP-N-acetylgalactosamine biosynthetic process"/>
    <property type="evidence" value="ECO:0007669"/>
    <property type="project" value="InterPro"/>
</dbReference>
<dbReference type="CDD" id="cd01555">
    <property type="entry name" value="UdpNAET"/>
    <property type="match status" value="1"/>
</dbReference>
<dbReference type="FunFam" id="3.65.10.10:FF:000002">
    <property type="entry name" value="UDP-N-acetylglucosamine 1-carboxyvinyltransferase"/>
    <property type="match status" value="1"/>
</dbReference>
<dbReference type="Gene3D" id="3.65.10.10">
    <property type="entry name" value="Enolpyruvate transferase domain"/>
    <property type="match status" value="2"/>
</dbReference>
<dbReference type="HAMAP" id="MF_00111">
    <property type="entry name" value="MurA"/>
    <property type="match status" value="1"/>
</dbReference>
<dbReference type="InterPro" id="IPR001986">
    <property type="entry name" value="Enolpyruvate_Tfrase_dom"/>
</dbReference>
<dbReference type="InterPro" id="IPR036968">
    <property type="entry name" value="Enolpyruvate_Tfrase_sf"/>
</dbReference>
<dbReference type="InterPro" id="IPR050068">
    <property type="entry name" value="MurA_subfamily"/>
</dbReference>
<dbReference type="InterPro" id="IPR013792">
    <property type="entry name" value="RNA3'P_cycl/enolpyr_Trfase_a/b"/>
</dbReference>
<dbReference type="InterPro" id="IPR005750">
    <property type="entry name" value="UDP_GlcNAc_COvinyl_MurA"/>
</dbReference>
<dbReference type="NCBIfam" id="TIGR01072">
    <property type="entry name" value="murA"/>
    <property type="match status" value="1"/>
</dbReference>
<dbReference type="NCBIfam" id="NF006873">
    <property type="entry name" value="PRK09369.1"/>
    <property type="match status" value="1"/>
</dbReference>
<dbReference type="PANTHER" id="PTHR43783">
    <property type="entry name" value="UDP-N-ACETYLGLUCOSAMINE 1-CARBOXYVINYLTRANSFERASE"/>
    <property type="match status" value="1"/>
</dbReference>
<dbReference type="PANTHER" id="PTHR43783:SF1">
    <property type="entry name" value="UDP-N-ACETYLGLUCOSAMINE 1-CARBOXYVINYLTRANSFERASE"/>
    <property type="match status" value="1"/>
</dbReference>
<dbReference type="Pfam" id="PF00275">
    <property type="entry name" value="EPSP_synthase"/>
    <property type="match status" value="1"/>
</dbReference>
<dbReference type="SUPFAM" id="SSF55205">
    <property type="entry name" value="EPT/RTPC-like"/>
    <property type="match status" value="1"/>
</dbReference>
<name>MURA_PSEU2</name>
<protein>
    <recommendedName>
        <fullName evidence="1">UDP-N-acetylglucosamine 1-carboxyvinyltransferase</fullName>
        <ecNumber evidence="1">2.5.1.7</ecNumber>
    </recommendedName>
    <alternativeName>
        <fullName evidence="1">Enoylpyruvate transferase</fullName>
    </alternativeName>
    <alternativeName>
        <fullName evidence="1">UDP-N-acetylglucosamine enolpyruvyl transferase</fullName>
        <shortName evidence="1">EPT</shortName>
    </alternativeName>
</protein>